<comment type="function">
    <text evidence="1">Core subunit of the mitochondrial membrane respiratory chain NADH dehydrogenase (Complex I) that is believed to belong to the minimal assembly required for catalysis. Complex I functions in the transfer of electrons from NADH to the respiratory chain. The immediate electron acceptor for the enzyme is believed to be ubiquinone (By similarity).</text>
</comment>
<comment type="catalytic activity">
    <reaction>
        <text>a ubiquinone + NADH + 5 H(+)(in) = a ubiquinol + NAD(+) + 4 H(+)(out)</text>
        <dbReference type="Rhea" id="RHEA:29091"/>
        <dbReference type="Rhea" id="RHEA-COMP:9565"/>
        <dbReference type="Rhea" id="RHEA-COMP:9566"/>
        <dbReference type="ChEBI" id="CHEBI:15378"/>
        <dbReference type="ChEBI" id="CHEBI:16389"/>
        <dbReference type="ChEBI" id="CHEBI:17976"/>
        <dbReference type="ChEBI" id="CHEBI:57540"/>
        <dbReference type="ChEBI" id="CHEBI:57945"/>
        <dbReference type="EC" id="7.1.1.2"/>
    </reaction>
</comment>
<comment type="subcellular location">
    <subcellularLocation>
        <location evidence="3">Mitochondrion inner membrane</location>
        <topology evidence="3">Multi-pass membrane protein</topology>
    </subcellularLocation>
</comment>
<comment type="similarity">
    <text evidence="3">Belongs to the complex I subunit 6 family.</text>
</comment>
<gene>
    <name type="primary">ND6</name>
    <name type="synonym">NAD6</name>
</gene>
<dbReference type="EC" id="7.1.1.2"/>
<dbReference type="EMBL" id="DQ157700">
    <property type="protein sequence ID" value="AAZ67019.1"/>
    <property type="molecule type" value="Genomic_DNA"/>
</dbReference>
<dbReference type="EMBL" id="AACP01000277">
    <property type="status" value="NOT_ANNOTATED_CDS"/>
    <property type="molecule type" value="Genomic_DNA"/>
</dbReference>
<dbReference type="RefSeq" id="YP_762704.1">
    <property type="nucleotide sequence ID" value="NC_008368.1"/>
</dbReference>
<dbReference type="SMR" id="Q0H8W8"/>
<dbReference type="STRING" id="237631.Q0H8W8"/>
<dbReference type="GeneID" id="4308284"/>
<dbReference type="InParanoid" id="Q0H8W8"/>
<dbReference type="Proteomes" id="UP000000561">
    <property type="component" value="Mitochondrion"/>
</dbReference>
<dbReference type="GO" id="GO:0005743">
    <property type="term" value="C:mitochondrial inner membrane"/>
    <property type="evidence" value="ECO:0007669"/>
    <property type="project" value="UniProtKB-SubCell"/>
</dbReference>
<dbReference type="GO" id="GO:0008137">
    <property type="term" value="F:NADH dehydrogenase (ubiquinone) activity"/>
    <property type="evidence" value="ECO:0007669"/>
    <property type="project" value="UniProtKB-EC"/>
</dbReference>
<dbReference type="Gene3D" id="1.20.120.1200">
    <property type="entry name" value="NADH-ubiquinone/plastoquinone oxidoreductase chain 6, subunit NuoJ"/>
    <property type="match status" value="1"/>
</dbReference>
<dbReference type="InterPro" id="IPR001457">
    <property type="entry name" value="NADH_UbQ/plastoQ_OxRdtase_su6"/>
</dbReference>
<dbReference type="InterPro" id="IPR042106">
    <property type="entry name" value="Nuo/plastoQ_OxRdtase_6_NuoJ"/>
</dbReference>
<dbReference type="PANTHER" id="PTHR33269">
    <property type="entry name" value="NADH-UBIQUINONE OXIDOREDUCTASE CHAIN 6"/>
    <property type="match status" value="1"/>
</dbReference>
<dbReference type="PANTHER" id="PTHR33269:SF17">
    <property type="entry name" value="NADH-UBIQUINONE OXIDOREDUCTASE CHAIN 6"/>
    <property type="match status" value="1"/>
</dbReference>
<dbReference type="Pfam" id="PF00499">
    <property type="entry name" value="Oxidored_q3"/>
    <property type="match status" value="1"/>
</dbReference>
<geneLocation type="mitochondrion"/>
<evidence type="ECO:0000250" key="1"/>
<evidence type="ECO:0000255" key="2"/>
<evidence type="ECO:0000305" key="3"/>
<accession>Q0H8W8</accession>
<protein>
    <recommendedName>
        <fullName>NADH-ubiquinone oxidoreductase chain 6</fullName>
        <ecNumber>7.1.1.2</ecNumber>
    </recommendedName>
    <alternativeName>
        <fullName>NADH dehydrogenase subunit 6</fullName>
    </alternativeName>
</protein>
<feature type="chain" id="PRO_0000271150" description="NADH-ubiquinone oxidoreductase chain 6">
    <location>
        <begin position="1"/>
        <end position="226"/>
    </location>
</feature>
<feature type="transmembrane region" description="Helical" evidence="2">
    <location>
        <begin position="1"/>
        <end position="21"/>
    </location>
</feature>
<feature type="transmembrane region" description="Helical" evidence="2">
    <location>
        <begin position="27"/>
        <end position="47"/>
    </location>
</feature>
<feature type="transmembrane region" description="Helical" evidence="2">
    <location>
        <begin position="52"/>
        <end position="72"/>
    </location>
</feature>
<feature type="transmembrane region" description="Helical" evidence="2">
    <location>
        <begin position="94"/>
        <end position="114"/>
    </location>
</feature>
<feature type="transmembrane region" description="Helical" evidence="2">
    <location>
        <begin position="126"/>
        <end position="146"/>
    </location>
</feature>
<feature type="transmembrane region" description="Helical" evidence="2">
    <location>
        <begin position="185"/>
        <end position="205"/>
    </location>
</feature>
<proteinExistence type="inferred from homology"/>
<reference key="1">
    <citation type="submission" date="2005-08" db="EMBL/GenBank/DDBJ databases">
        <title>Annotation of mitochondrial genome of Ustilago maydis and comparative analysis of basidiomycete mtDNAs.</title>
        <authorList>
            <person name="Kennell J.C."/>
            <person name="Boehmer C."/>
        </authorList>
    </citation>
    <scope>NUCLEOTIDE SEQUENCE [LARGE SCALE GENOMIC DNA]</scope>
    <source>
        <strain>DSM 14603 / FGSC 9021 / UM521</strain>
    </source>
</reference>
<reference key="2">
    <citation type="journal article" date="2006" name="Nature">
        <title>Insights from the genome of the biotrophic fungal plant pathogen Ustilago maydis.</title>
        <authorList>
            <person name="Kaemper J."/>
            <person name="Kahmann R."/>
            <person name="Boelker M."/>
            <person name="Ma L.-J."/>
            <person name="Brefort T."/>
            <person name="Saville B.J."/>
            <person name="Banuett F."/>
            <person name="Kronstad J.W."/>
            <person name="Gold S.E."/>
            <person name="Mueller O."/>
            <person name="Perlin M.H."/>
            <person name="Woesten H.A.B."/>
            <person name="de Vries R."/>
            <person name="Ruiz-Herrera J."/>
            <person name="Reynaga-Pena C.G."/>
            <person name="Snetselaar K."/>
            <person name="McCann M."/>
            <person name="Perez-Martin J."/>
            <person name="Feldbruegge M."/>
            <person name="Basse C.W."/>
            <person name="Steinberg G."/>
            <person name="Ibeas J.I."/>
            <person name="Holloman W."/>
            <person name="Guzman P."/>
            <person name="Farman M.L."/>
            <person name="Stajich J.E."/>
            <person name="Sentandreu R."/>
            <person name="Gonzalez-Prieto J.M."/>
            <person name="Kennell J.C."/>
            <person name="Molina L."/>
            <person name="Schirawski J."/>
            <person name="Mendoza-Mendoza A."/>
            <person name="Greilinger D."/>
            <person name="Muench K."/>
            <person name="Roessel N."/>
            <person name="Scherer M."/>
            <person name="Vranes M."/>
            <person name="Ladendorf O."/>
            <person name="Vincon V."/>
            <person name="Fuchs U."/>
            <person name="Sandrock B."/>
            <person name="Meng S."/>
            <person name="Ho E.C.H."/>
            <person name="Cahill M.J."/>
            <person name="Boyce K.J."/>
            <person name="Klose J."/>
            <person name="Klosterman S.J."/>
            <person name="Deelstra H.J."/>
            <person name="Ortiz-Castellanos L."/>
            <person name="Li W."/>
            <person name="Sanchez-Alonso P."/>
            <person name="Schreier P.H."/>
            <person name="Haeuser-Hahn I."/>
            <person name="Vaupel M."/>
            <person name="Koopmann E."/>
            <person name="Friedrich G."/>
            <person name="Voss H."/>
            <person name="Schlueter T."/>
            <person name="Margolis J."/>
            <person name="Platt D."/>
            <person name="Swimmer C."/>
            <person name="Gnirke A."/>
            <person name="Chen F."/>
            <person name="Vysotskaia V."/>
            <person name="Mannhaupt G."/>
            <person name="Gueldener U."/>
            <person name="Muensterkoetter M."/>
            <person name="Haase D."/>
            <person name="Oesterheld M."/>
            <person name="Mewes H.-W."/>
            <person name="Mauceli E.W."/>
            <person name="DeCaprio D."/>
            <person name="Wade C.M."/>
            <person name="Butler J."/>
            <person name="Young S.K."/>
            <person name="Jaffe D.B."/>
            <person name="Calvo S.E."/>
            <person name="Nusbaum C."/>
            <person name="Galagan J.E."/>
            <person name="Birren B.W."/>
        </authorList>
    </citation>
    <scope>NUCLEOTIDE SEQUENCE [LARGE SCALE GENOMIC DNA]</scope>
    <source>
        <strain>DSM 14603 / FGSC 9021 / UM521</strain>
    </source>
</reference>
<name>NU6M_MYCMD</name>
<organism>
    <name type="scientific">Mycosarcoma maydis</name>
    <name type="common">Corn smut fungus</name>
    <name type="synonym">Ustilago maydis</name>
    <dbReference type="NCBI Taxonomy" id="5270"/>
    <lineage>
        <taxon>Eukaryota</taxon>
        <taxon>Fungi</taxon>
        <taxon>Dikarya</taxon>
        <taxon>Basidiomycota</taxon>
        <taxon>Ustilaginomycotina</taxon>
        <taxon>Ustilaginomycetes</taxon>
        <taxon>Ustilaginales</taxon>
        <taxon>Ustilaginaceae</taxon>
        <taxon>Mycosarcoma</taxon>
    </lineage>
</organism>
<keyword id="KW-0249">Electron transport</keyword>
<keyword id="KW-0472">Membrane</keyword>
<keyword id="KW-0496">Mitochondrion</keyword>
<keyword id="KW-0999">Mitochondrion inner membrane</keyword>
<keyword id="KW-0520">NAD</keyword>
<keyword id="KW-1185">Reference proteome</keyword>
<keyword id="KW-0679">Respiratory chain</keyword>
<keyword id="KW-1278">Translocase</keyword>
<keyword id="KW-0812">Transmembrane</keyword>
<keyword id="KW-1133">Transmembrane helix</keyword>
<keyword id="KW-0813">Transport</keyword>
<keyword id="KW-0830">Ubiquinone</keyword>
<sequence length="226" mass="24479">MNNFLLDFLALGAVLSGILVITSKNPVISVLFLISVFVNVAGYLVLLGVGFIGISYLIVYIGAVTVLFLFVIMMLNLQLTELSAVGNEYTKNLPLATIIGSLLLFELVSVVPSFDGFYQLNSTTTIFKFLGVGILNWFNSLSLGVGNTFAFAEVNQTFNTFAADTQFANFLQIQSIGQVLYTNGALWLIVSSLILLLAMVGPITLSMNKKDSSPANQVNTVNRLVK</sequence>